<keyword id="KW-0067">ATP-binding</keyword>
<keyword id="KW-0227">DNA damage</keyword>
<keyword id="KW-0234">DNA repair</keyword>
<keyword id="KW-0238">DNA-binding</keyword>
<keyword id="KW-0547">Nucleotide-binding</keyword>
<keyword id="KW-1185">Reference proteome</keyword>
<accession>A1R0M2</accession>
<organism>
    <name type="scientific">Borrelia turicatae (strain 91E135)</name>
    <dbReference type="NCBI Taxonomy" id="314724"/>
    <lineage>
        <taxon>Bacteria</taxon>
        <taxon>Pseudomonadati</taxon>
        <taxon>Spirochaetota</taxon>
        <taxon>Spirochaetia</taxon>
        <taxon>Spirochaetales</taxon>
        <taxon>Borreliaceae</taxon>
        <taxon>Borrelia</taxon>
    </lineage>
</organism>
<gene>
    <name evidence="1" type="primary">mutS</name>
    <name type="ordered locus">BT0797</name>
</gene>
<sequence>MRKDVTPMMRQYLNIKDKHKDAILFFRVGSFYEMFFDDALEGSKLLGLTLTKRENVPMCGVPCHTSKDYIKKLILLDKKVAICEQGLQTDPKGPLEREVVEVISPGVVIDEDFLQDDINNYLIAISDYKDYYSFSYIDLSTSRLGIILYEGNFLEKLRRDIEKYSPKEIIVSEDFYYEYLEKLALDRFLVNKIPHWHFDKEIAMKSLKEHFNVLSLSALGFKEDEPYYVSSFLIIDYIKNNLKNLLINIDTIHINNDSEYMFLDDVTQINLELVKNNNDLTSCYSLYSVLNDCKTPMGKRLLREYILNPLLDIVAINNRLDHVEFLNNNINLSMKLRDILSNVWDIERIISRLQMKKYVKKDFLLIKESLTAFFLAKRLLNEHSFSYWIFDVNDENNIREIYSLIDCSISKEPDELIQHGYNFEIDRLREIKNNASKYVDDYLNFERNFSKISSLKIRRINVRGLFFEVTKSYYGQVPSHFIESQTLNSVKRYKTNKLIELERDINDAEDNLLALEQEVFDDIASKIVKHSVVIKKIANFFAYVDVVSDFAYLAKKNEYVRPTLTNNKEIILECSRHPVVEHYMKGVEAFTKNSVKIDNDKYFCLITGPNMAGKSTYLRQTALVVLMGHIGSFVPANQAIIGITDKIFCRIGASDNISKGESTFLVEMNETANILRNATQNSLIIMDEVGRGTSTNDGLAIAYSIVEYILEHIQARSLFATHFHELSAIKHDSFVNLSMKIERQGDELIFLREVEEKPSLNSYGIYVARIAGIPLKVIERANVILKSLTSREHLYVPEFFTSATLVINDGEEAMKEDLSYELELNDYLELKNFISKIDVNNITPFQAMNLLSEIILKTKT</sequence>
<dbReference type="EMBL" id="CP000049">
    <property type="protein sequence ID" value="AAX18113.1"/>
    <property type="molecule type" value="Genomic_DNA"/>
</dbReference>
<dbReference type="RefSeq" id="WP_011772731.1">
    <property type="nucleotide sequence ID" value="NC_008710.1"/>
</dbReference>
<dbReference type="SMR" id="A1R0M2"/>
<dbReference type="KEGG" id="btu:BT0797"/>
<dbReference type="eggNOG" id="COG0249">
    <property type="taxonomic scope" value="Bacteria"/>
</dbReference>
<dbReference type="HOGENOM" id="CLU_002472_3_1_12"/>
<dbReference type="Proteomes" id="UP000001205">
    <property type="component" value="Chromosome"/>
</dbReference>
<dbReference type="GO" id="GO:0005829">
    <property type="term" value="C:cytosol"/>
    <property type="evidence" value="ECO:0007669"/>
    <property type="project" value="TreeGrafter"/>
</dbReference>
<dbReference type="GO" id="GO:0005524">
    <property type="term" value="F:ATP binding"/>
    <property type="evidence" value="ECO:0007669"/>
    <property type="project" value="UniProtKB-UniRule"/>
</dbReference>
<dbReference type="GO" id="GO:0140664">
    <property type="term" value="F:ATP-dependent DNA damage sensor activity"/>
    <property type="evidence" value="ECO:0007669"/>
    <property type="project" value="InterPro"/>
</dbReference>
<dbReference type="GO" id="GO:0003684">
    <property type="term" value="F:damaged DNA binding"/>
    <property type="evidence" value="ECO:0007669"/>
    <property type="project" value="UniProtKB-UniRule"/>
</dbReference>
<dbReference type="GO" id="GO:0030983">
    <property type="term" value="F:mismatched DNA binding"/>
    <property type="evidence" value="ECO:0007669"/>
    <property type="project" value="InterPro"/>
</dbReference>
<dbReference type="GO" id="GO:0006298">
    <property type="term" value="P:mismatch repair"/>
    <property type="evidence" value="ECO:0007669"/>
    <property type="project" value="UniProtKB-UniRule"/>
</dbReference>
<dbReference type="CDD" id="cd03284">
    <property type="entry name" value="ABC_MutS1"/>
    <property type="match status" value="1"/>
</dbReference>
<dbReference type="Gene3D" id="1.10.1420.10">
    <property type="match status" value="2"/>
</dbReference>
<dbReference type="Gene3D" id="3.40.1170.10">
    <property type="entry name" value="DNA repair protein MutS, domain I"/>
    <property type="match status" value="1"/>
</dbReference>
<dbReference type="Gene3D" id="3.30.420.110">
    <property type="entry name" value="MutS, connector domain"/>
    <property type="match status" value="1"/>
</dbReference>
<dbReference type="Gene3D" id="3.40.50.300">
    <property type="entry name" value="P-loop containing nucleotide triphosphate hydrolases"/>
    <property type="match status" value="1"/>
</dbReference>
<dbReference type="HAMAP" id="MF_00096">
    <property type="entry name" value="MutS"/>
    <property type="match status" value="1"/>
</dbReference>
<dbReference type="InterPro" id="IPR005748">
    <property type="entry name" value="DNA_mismatch_repair_MutS"/>
</dbReference>
<dbReference type="InterPro" id="IPR007695">
    <property type="entry name" value="DNA_mismatch_repair_MutS-lik_N"/>
</dbReference>
<dbReference type="InterPro" id="IPR017261">
    <property type="entry name" value="DNA_mismatch_repair_MutS/MSH"/>
</dbReference>
<dbReference type="InterPro" id="IPR000432">
    <property type="entry name" value="DNA_mismatch_repair_MutS_C"/>
</dbReference>
<dbReference type="InterPro" id="IPR007861">
    <property type="entry name" value="DNA_mismatch_repair_MutS_clamp"/>
</dbReference>
<dbReference type="InterPro" id="IPR007696">
    <property type="entry name" value="DNA_mismatch_repair_MutS_core"/>
</dbReference>
<dbReference type="InterPro" id="IPR016151">
    <property type="entry name" value="DNA_mismatch_repair_MutS_N"/>
</dbReference>
<dbReference type="InterPro" id="IPR036187">
    <property type="entry name" value="DNA_mismatch_repair_MutS_sf"/>
</dbReference>
<dbReference type="InterPro" id="IPR007860">
    <property type="entry name" value="DNA_mmatch_repair_MutS_con_dom"/>
</dbReference>
<dbReference type="InterPro" id="IPR045076">
    <property type="entry name" value="MutS"/>
</dbReference>
<dbReference type="InterPro" id="IPR036678">
    <property type="entry name" value="MutS_con_dom_sf"/>
</dbReference>
<dbReference type="InterPro" id="IPR027417">
    <property type="entry name" value="P-loop_NTPase"/>
</dbReference>
<dbReference type="NCBIfam" id="TIGR01070">
    <property type="entry name" value="mutS1"/>
    <property type="match status" value="1"/>
</dbReference>
<dbReference type="NCBIfam" id="NF003810">
    <property type="entry name" value="PRK05399.1"/>
    <property type="match status" value="1"/>
</dbReference>
<dbReference type="PANTHER" id="PTHR11361:SF34">
    <property type="entry name" value="DNA MISMATCH REPAIR PROTEIN MSH1, MITOCHONDRIAL"/>
    <property type="match status" value="1"/>
</dbReference>
<dbReference type="PANTHER" id="PTHR11361">
    <property type="entry name" value="DNA MISMATCH REPAIR PROTEIN MUTS FAMILY MEMBER"/>
    <property type="match status" value="1"/>
</dbReference>
<dbReference type="Pfam" id="PF01624">
    <property type="entry name" value="MutS_I"/>
    <property type="match status" value="1"/>
</dbReference>
<dbReference type="Pfam" id="PF05188">
    <property type="entry name" value="MutS_II"/>
    <property type="match status" value="1"/>
</dbReference>
<dbReference type="Pfam" id="PF05192">
    <property type="entry name" value="MutS_III"/>
    <property type="match status" value="1"/>
</dbReference>
<dbReference type="Pfam" id="PF05190">
    <property type="entry name" value="MutS_IV"/>
    <property type="match status" value="1"/>
</dbReference>
<dbReference type="Pfam" id="PF00488">
    <property type="entry name" value="MutS_V"/>
    <property type="match status" value="1"/>
</dbReference>
<dbReference type="PIRSF" id="PIRSF037677">
    <property type="entry name" value="DNA_mis_repair_Msh6"/>
    <property type="match status" value="1"/>
</dbReference>
<dbReference type="SMART" id="SM00534">
    <property type="entry name" value="MUTSac"/>
    <property type="match status" value="1"/>
</dbReference>
<dbReference type="SMART" id="SM00533">
    <property type="entry name" value="MUTSd"/>
    <property type="match status" value="1"/>
</dbReference>
<dbReference type="SUPFAM" id="SSF55271">
    <property type="entry name" value="DNA repair protein MutS, domain I"/>
    <property type="match status" value="1"/>
</dbReference>
<dbReference type="SUPFAM" id="SSF53150">
    <property type="entry name" value="DNA repair protein MutS, domain II"/>
    <property type="match status" value="1"/>
</dbReference>
<dbReference type="SUPFAM" id="SSF48334">
    <property type="entry name" value="DNA repair protein MutS, domain III"/>
    <property type="match status" value="1"/>
</dbReference>
<dbReference type="SUPFAM" id="SSF52540">
    <property type="entry name" value="P-loop containing nucleoside triphosphate hydrolases"/>
    <property type="match status" value="1"/>
</dbReference>
<dbReference type="PROSITE" id="PS00486">
    <property type="entry name" value="DNA_MISMATCH_REPAIR_2"/>
    <property type="match status" value="1"/>
</dbReference>
<proteinExistence type="inferred from homology"/>
<reference key="1">
    <citation type="submission" date="2004-12" db="EMBL/GenBank/DDBJ databases">
        <title>The genome sequence of Borrelia hermsii and Borrelia turicatae: comparative analysis of two agents of endemic N. America relapsing fever.</title>
        <authorList>
            <person name="Porcella S.F."/>
            <person name="Raffel S.J."/>
            <person name="Schrumpf M.E."/>
            <person name="Montgomery B."/>
            <person name="Smith T."/>
            <person name="Schwan T.G."/>
        </authorList>
    </citation>
    <scope>NUCLEOTIDE SEQUENCE [LARGE SCALE GENOMIC DNA]</scope>
    <source>
        <strain>91E135</strain>
    </source>
</reference>
<evidence type="ECO:0000255" key="1">
    <source>
        <dbReference type="HAMAP-Rule" id="MF_00096"/>
    </source>
</evidence>
<feature type="chain" id="PRO_1000192198" description="DNA mismatch repair protein MutS">
    <location>
        <begin position="1"/>
        <end position="860"/>
    </location>
</feature>
<feature type="binding site" evidence="1">
    <location>
        <begin position="608"/>
        <end position="615"/>
    </location>
    <ligand>
        <name>ATP</name>
        <dbReference type="ChEBI" id="CHEBI:30616"/>
    </ligand>
</feature>
<comment type="function">
    <text evidence="1">This protein is involved in the repair of mismatches in DNA. It is possible that it carries out the mismatch recognition step. This protein has a weak ATPase activity.</text>
</comment>
<comment type="similarity">
    <text evidence="1">Belongs to the DNA mismatch repair MutS family.</text>
</comment>
<name>MUTS_BORT9</name>
<protein>
    <recommendedName>
        <fullName evidence="1">DNA mismatch repair protein MutS</fullName>
    </recommendedName>
</protein>